<accession>A1T5Q3</accession>
<protein>
    <recommendedName>
        <fullName evidence="1">Nucleoside triphosphate pyrophosphatase</fullName>
        <ecNumber evidence="1">3.6.1.9</ecNumber>
    </recommendedName>
    <alternativeName>
        <fullName evidence="1">Nucleotide pyrophosphatase</fullName>
        <shortName evidence="1">Nucleotide PPase</shortName>
    </alternativeName>
</protein>
<gene>
    <name type="ordered locus">Mvan_1674</name>
</gene>
<sequence length="209" mass="21861">MTRVVLASASKGRLGVLRQAGIDPQVIVSAVDEDTLLAALDPDLPPEAVVAKLATAKALSVAAELPDELLADCVVIGCDSMLFLDGTLRGKPGSAEAARAQWESMAGSAGHLLTGHALLRISGGVITHTEGDTGSTKVHFGKPAEDEITRYVDSGEPIHVAGAFTLNGLGGWFVDRIEGDPSNVIGLSLPLVHRLVRRTGLSISDLWQR</sequence>
<reference key="1">
    <citation type="submission" date="2006-12" db="EMBL/GenBank/DDBJ databases">
        <title>Complete sequence of Mycobacterium vanbaalenii PYR-1.</title>
        <authorList>
            <consortium name="US DOE Joint Genome Institute"/>
            <person name="Copeland A."/>
            <person name="Lucas S."/>
            <person name="Lapidus A."/>
            <person name="Barry K."/>
            <person name="Detter J.C."/>
            <person name="Glavina del Rio T."/>
            <person name="Hammon N."/>
            <person name="Israni S."/>
            <person name="Dalin E."/>
            <person name="Tice H."/>
            <person name="Pitluck S."/>
            <person name="Singan V."/>
            <person name="Schmutz J."/>
            <person name="Larimer F."/>
            <person name="Land M."/>
            <person name="Hauser L."/>
            <person name="Kyrpides N."/>
            <person name="Anderson I.J."/>
            <person name="Miller C."/>
            <person name="Richardson P."/>
        </authorList>
    </citation>
    <scope>NUCLEOTIDE SEQUENCE [LARGE SCALE GENOMIC DNA]</scope>
    <source>
        <strain>DSM 7251 / JCM 13017 / BCRC 16820 / KCTC 9966 / NRRL B-24157 / PYR-1</strain>
    </source>
</reference>
<organism>
    <name type="scientific">Mycolicibacterium vanbaalenii (strain DSM 7251 / JCM 13017 / BCRC 16820 / KCTC 9966 / NRRL B-24157 / PYR-1)</name>
    <name type="common">Mycobacterium vanbaalenii</name>
    <dbReference type="NCBI Taxonomy" id="350058"/>
    <lineage>
        <taxon>Bacteria</taxon>
        <taxon>Bacillati</taxon>
        <taxon>Actinomycetota</taxon>
        <taxon>Actinomycetes</taxon>
        <taxon>Mycobacteriales</taxon>
        <taxon>Mycobacteriaceae</taxon>
        <taxon>Mycolicibacterium</taxon>
    </lineage>
</organism>
<feature type="chain" id="PRO_1000146297" description="Nucleoside triphosphate pyrophosphatase">
    <location>
        <begin position="1"/>
        <end position="209"/>
    </location>
</feature>
<feature type="active site" description="Proton acceptor" evidence="1">
    <location>
        <position position="79"/>
    </location>
</feature>
<name>NTPP_MYCVP</name>
<dbReference type="EC" id="3.6.1.9" evidence="1"/>
<dbReference type="EMBL" id="CP000511">
    <property type="protein sequence ID" value="ABM12503.1"/>
    <property type="molecule type" value="Genomic_DNA"/>
</dbReference>
<dbReference type="RefSeq" id="WP_011778928.1">
    <property type="nucleotide sequence ID" value="NC_008726.1"/>
</dbReference>
<dbReference type="SMR" id="A1T5Q3"/>
<dbReference type="STRING" id="350058.Mvan_1674"/>
<dbReference type="KEGG" id="mva:Mvan_1674"/>
<dbReference type="eggNOG" id="COG0424">
    <property type="taxonomic scope" value="Bacteria"/>
</dbReference>
<dbReference type="HOGENOM" id="CLU_040416_1_2_11"/>
<dbReference type="Proteomes" id="UP000009159">
    <property type="component" value="Chromosome"/>
</dbReference>
<dbReference type="GO" id="GO:0005737">
    <property type="term" value="C:cytoplasm"/>
    <property type="evidence" value="ECO:0007669"/>
    <property type="project" value="UniProtKB-SubCell"/>
</dbReference>
<dbReference type="GO" id="GO:0047429">
    <property type="term" value="F:nucleoside triphosphate diphosphatase activity"/>
    <property type="evidence" value="ECO:0007669"/>
    <property type="project" value="UniProtKB-EC"/>
</dbReference>
<dbReference type="GO" id="GO:0009117">
    <property type="term" value="P:nucleotide metabolic process"/>
    <property type="evidence" value="ECO:0007669"/>
    <property type="project" value="UniProtKB-KW"/>
</dbReference>
<dbReference type="CDD" id="cd00555">
    <property type="entry name" value="Maf"/>
    <property type="match status" value="1"/>
</dbReference>
<dbReference type="Gene3D" id="3.90.950.10">
    <property type="match status" value="1"/>
</dbReference>
<dbReference type="HAMAP" id="MF_00528">
    <property type="entry name" value="Maf"/>
    <property type="match status" value="1"/>
</dbReference>
<dbReference type="InterPro" id="IPR029001">
    <property type="entry name" value="ITPase-like_fam"/>
</dbReference>
<dbReference type="InterPro" id="IPR003697">
    <property type="entry name" value="Maf-like"/>
</dbReference>
<dbReference type="NCBIfam" id="TIGR00172">
    <property type="entry name" value="maf"/>
    <property type="match status" value="1"/>
</dbReference>
<dbReference type="PANTHER" id="PTHR43213">
    <property type="entry name" value="BIFUNCTIONAL DTTP/UTP PYROPHOSPHATASE/METHYLTRANSFERASE PROTEIN-RELATED"/>
    <property type="match status" value="1"/>
</dbReference>
<dbReference type="PANTHER" id="PTHR43213:SF5">
    <property type="entry name" value="BIFUNCTIONAL DTTP_UTP PYROPHOSPHATASE_METHYLTRANSFERASE PROTEIN-RELATED"/>
    <property type="match status" value="1"/>
</dbReference>
<dbReference type="Pfam" id="PF02545">
    <property type="entry name" value="Maf"/>
    <property type="match status" value="1"/>
</dbReference>
<dbReference type="PIRSF" id="PIRSF006305">
    <property type="entry name" value="Maf"/>
    <property type="match status" value="1"/>
</dbReference>
<dbReference type="SUPFAM" id="SSF52972">
    <property type="entry name" value="ITPase-like"/>
    <property type="match status" value="1"/>
</dbReference>
<proteinExistence type="inferred from homology"/>
<keyword id="KW-0963">Cytoplasm</keyword>
<keyword id="KW-0378">Hydrolase</keyword>
<keyword id="KW-0546">Nucleotide metabolism</keyword>
<evidence type="ECO:0000255" key="1">
    <source>
        <dbReference type="HAMAP-Rule" id="MF_00528"/>
    </source>
</evidence>
<comment type="function">
    <text evidence="1">Nucleoside triphosphate pyrophosphatase. May have a dual role in cell division arrest and in preventing the incorporation of modified nucleotides into cellular nucleic acids.</text>
</comment>
<comment type="catalytic activity">
    <reaction evidence="1">
        <text>a ribonucleoside 5'-triphosphate + H2O = a ribonucleoside 5'-phosphate + diphosphate + H(+)</text>
        <dbReference type="Rhea" id="RHEA:23996"/>
        <dbReference type="ChEBI" id="CHEBI:15377"/>
        <dbReference type="ChEBI" id="CHEBI:15378"/>
        <dbReference type="ChEBI" id="CHEBI:33019"/>
        <dbReference type="ChEBI" id="CHEBI:58043"/>
        <dbReference type="ChEBI" id="CHEBI:61557"/>
        <dbReference type="EC" id="3.6.1.9"/>
    </reaction>
</comment>
<comment type="catalytic activity">
    <reaction evidence="1">
        <text>a 2'-deoxyribonucleoside 5'-triphosphate + H2O = a 2'-deoxyribonucleoside 5'-phosphate + diphosphate + H(+)</text>
        <dbReference type="Rhea" id="RHEA:44644"/>
        <dbReference type="ChEBI" id="CHEBI:15377"/>
        <dbReference type="ChEBI" id="CHEBI:15378"/>
        <dbReference type="ChEBI" id="CHEBI:33019"/>
        <dbReference type="ChEBI" id="CHEBI:61560"/>
        <dbReference type="ChEBI" id="CHEBI:65317"/>
        <dbReference type="EC" id="3.6.1.9"/>
    </reaction>
</comment>
<comment type="cofactor">
    <cofactor evidence="1">
        <name>a divalent metal cation</name>
        <dbReference type="ChEBI" id="CHEBI:60240"/>
    </cofactor>
</comment>
<comment type="subcellular location">
    <subcellularLocation>
        <location evidence="1">Cytoplasm</location>
    </subcellularLocation>
</comment>
<comment type="similarity">
    <text evidence="1">Belongs to the Maf family.</text>
</comment>